<proteinExistence type="evidence at protein level"/>
<evidence type="ECO:0000250" key="1">
    <source>
        <dbReference type="UniProtKB" id="P02144"/>
    </source>
</evidence>
<evidence type="ECO:0000250" key="2">
    <source>
        <dbReference type="UniProtKB" id="P02185"/>
    </source>
</evidence>
<evidence type="ECO:0000250" key="3">
    <source>
        <dbReference type="UniProtKB" id="P02189"/>
    </source>
</evidence>
<evidence type="ECO:0000250" key="4">
    <source>
        <dbReference type="UniProtKB" id="P68082"/>
    </source>
</evidence>
<evidence type="ECO:0000255" key="5">
    <source>
        <dbReference type="PROSITE-ProRule" id="PRU00238"/>
    </source>
</evidence>
<evidence type="ECO:0000269" key="6">
    <source>
    </source>
</evidence>
<evidence type="ECO:0000269" key="7">
    <source ref="2"/>
</evidence>
<sequence length="153" mass="17436">MGLNDQEWQQVLTMWGKVESDLAGHGHAVLMRLFKSHPETMDRFDKFRGLKTPDEMRGSEDMKKHGVTVLTLGQILKKKGHHEAELKPLSQTHATKHKVPVKYLEFISEAIMKVIAQKHASNFGADAQEAMKKALELFRNDMASKYKEFGFQG</sequence>
<protein>
    <recommendedName>
        <fullName>Myoglobin</fullName>
    </recommendedName>
    <alternativeName>
        <fullName evidence="1">Nitrite reductase MB</fullName>
        <ecNumber evidence="1">1.7.-.-</ecNumber>
    </alternativeName>
    <alternativeName>
        <fullName evidence="1">Pseudoperoxidase MB</fullName>
        <ecNumber evidence="1">1.11.1.-</ecNumber>
    </alternativeName>
</protein>
<accession>P02199</accession>
<organism>
    <name type="scientific">Aptenodytes forsteri</name>
    <name type="common">Emperor penguin</name>
    <dbReference type="NCBI Taxonomy" id="9233"/>
    <lineage>
        <taxon>Eukaryota</taxon>
        <taxon>Metazoa</taxon>
        <taxon>Chordata</taxon>
        <taxon>Craniata</taxon>
        <taxon>Vertebrata</taxon>
        <taxon>Euteleostomi</taxon>
        <taxon>Archelosauria</taxon>
        <taxon>Archosauria</taxon>
        <taxon>Dinosauria</taxon>
        <taxon>Saurischia</taxon>
        <taxon>Theropoda</taxon>
        <taxon>Coelurosauria</taxon>
        <taxon>Aves</taxon>
        <taxon>Neognathae</taxon>
        <taxon>Neoaves</taxon>
        <taxon>Aequornithes</taxon>
        <taxon>Sphenisciformes</taxon>
        <taxon>Spheniscidae</taxon>
        <taxon>Aptenodytes</taxon>
    </lineage>
</organism>
<gene>
    <name type="primary">MB</name>
</gene>
<name>MYG_APTFO</name>
<comment type="function">
    <text evidence="1">Monomeric heme protein which primary function is to store oxygen and facilitate its diffusion within muscle tissues. Reversibly binds oxygen through a pentacoordinated heme iron and enables its timely and efficient release as needed during periods of heightened demand. Depending on the oxidative conditions of tissues and cells, and in addition to its ability to bind oxygen, it also has a nitrite reductase activity whereby it regulates the production of bioactive nitric oxide. Under stress conditions, like hypoxia and anoxia, it also protects cells against reactive oxygen species thanks to its pseudoperoxidase activity.</text>
</comment>
<comment type="catalytic activity">
    <reaction evidence="1">
        <text>Fe(III)-heme b-[protein] + nitric oxide + H2O = Fe(II)-heme b-[protein] + nitrite + 2 H(+)</text>
        <dbReference type="Rhea" id="RHEA:77711"/>
        <dbReference type="Rhea" id="RHEA-COMP:18975"/>
        <dbReference type="Rhea" id="RHEA-COMP:18976"/>
        <dbReference type="ChEBI" id="CHEBI:15377"/>
        <dbReference type="ChEBI" id="CHEBI:15378"/>
        <dbReference type="ChEBI" id="CHEBI:16301"/>
        <dbReference type="ChEBI" id="CHEBI:16480"/>
        <dbReference type="ChEBI" id="CHEBI:55376"/>
        <dbReference type="ChEBI" id="CHEBI:60344"/>
    </reaction>
    <physiologicalReaction direction="right-to-left" evidence="1">
        <dbReference type="Rhea" id="RHEA:77713"/>
    </physiologicalReaction>
</comment>
<comment type="catalytic activity">
    <reaction evidence="1">
        <text>H2O2 + AH2 = A + 2 H2O</text>
        <dbReference type="Rhea" id="RHEA:30275"/>
        <dbReference type="ChEBI" id="CHEBI:13193"/>
        <dbReference type="ChEBI" id="CHEBI:15377"/>
        <dbReference type="ChEBI" id="CHEBI:16240"/>
        <dbReference type="ChEBI" id="CHEBI:17499"/>
    </reaction>
</comment>
<comment type="subunit">
    <text evidence="2">Monomeric.</text>
</comment>
<comment type="subcellular location">
    <subcellularLocation>
        <location evidence="1">Cytoplasm</location>
        <location evidence="1">Sarcoplasm</location>
    </subcellularLocation>
</comment>
<comment type="similarity">
    <text evidence="5">Belongs to the globin family.</text>
</comment>
<feature type="initiator methionine" description="Removed" evidence="6 7">
    <location>
        <position position="1"/>
    </location>
</feature>
<feature type="chain" id="PRO_0000053354" description="Myoglobin">
    <location>
        <begin position="2"/>
        <end position="153"/>
    </location>
</feature>
<feature type="domain" description="Globin" evidence="5">
    <location>
        <begin position="2"/>
        <end position="147"/>
    </location>
</feature>
<feature type="binding site" evidence="4">
    <location>
        <position position="65"/>
    </location>
    <ligand>
        <name>nitrite</name>
        <dbReference type="ChEBI" id="CHEBI:16301"/>
    </ligand>
</feature>
<feature type="binding site" evidence="3 5">
    <location>
        <position position="65"/>
    </location>
    <ligand>
        <name>O2</name>
        <dbReference type="ChEBI" id="CHEBI:15379"/>
    </ligand>
</feature>
<feature type="binding site" description="proximal binding residue" evidence="1">
    <location>
        <position position="93"/>
    </location>
    <ligand>
        <name>heme b</name>
        <dbReference type="ChEBI" id="CHEBI:60344"/>
    </ligand>
    <ligandPart>
        <name>Fe</name>
        <dbReference type="ChEBI" id="CHEBI:18248"/>
    </ligandPart>
</feature>
<keyword id="KW-0963">Cytoplasm</keyword>
<keyword id="KW-0903">Direct protein sequencing</keyword>
<keyword id="KW-0349">Heme</keyword>
<keyword id="KW-0408">Iron</keyword>
<keyword id="KW-0479">Metal-binding</keyword>
<keyword id="KW-0514">Muscle protein</keyword>
<keyword id="KW-0560">Oxidoreductase</keyword>
<keyword id="KW-0561">Oxygen transport</keyword>
<keyword id="KW-0813">Transport</keyword>
<dbReference type="EC" id="1.7.-.-" evidence="1"/>
<dbReference type="EC" id="1.11.1.-" evidence="1"/>
<dbReference type="PIR" id="A94423">
    <property type="entry name" value="MYPN"/>
</dbReference>
<dbReference type="SMR" id="P02199"/>
<dbReference type="GO" id="GO:0070062">
    <property type="term" value="C:extracellular exosome"/>
    <property type="evidence" value="ECO:0007669"/>
    <property type="project" value="TreeGrafter"/>
</dbReference>
<dbReference type="GO" id="GO:0016528">
    <property type="term" value="C:sarcoplasm"/>
    <property type="evidence" value="ECO:0000250"/>
    <property type="project" value="UniProtKB"/>
</dbReference>
<dbReference type="GO" id="GO:0020037">
    <property type="term" value="F:heme binding"/>
    <property type="evidence" value="ECO:0007669"/>
    <property type="project" value="InterPro"/>
</dbReference>
<dbReference type="GO" id="GO:0046872">
    <property type="term" value="F:metal ion binding"/>
    <property type="evidence" value="ECO:0007669"/>
    <property type="project" value="UniProtKB-KW"/>
</dbReference>
<dbReference type="GO" id="GO:0098809">
    <property type="term" value="F:nitrite reductase activity"/>
    <property type="evidence" value="ECO:0000250"/>
    <property type="project" value="UniProtKB"/>
</dbReference>
<dbReference type="GO" id="GO:0019825">
    <property type="term" value="F:oxygen binding"/>
    <property type="evidence" value="ECO:0007669"/>
    <property type="project" value="InterPro"/>
</dbReference>
<dbReference type="GO" id="GO:0005344">
    <property type="term" value="F:oxygen carrier activity"/>
    <property type="evidence" value="ECO:0000250"/>
    <property type="project" value="UniProtKB"/>
</dbReference>
<dbReference type="GO" id="GO:0004601">
    <property type="term" value="F:peroxidase activity"/>
    <property type="evidence" value="ECO:0000250"/>
    <property type="project" value="UniProtKB"/>
</dbReference>
<dbReference type="GO" id="GO:0019430">
    <property type="term" value="P:removal of superoxide radicals"/>
    <property type="evidence" value="ECO:0000250"/>
    <property type="project" value="UniProtKB"/>
</dbReference>
<dbReference type="Gene3D" id="6.10.140.2100">
    <property type="match status" value="1"/>
</dbReference>
<dbReference type="Gene3D" id="6.10.140.2110">
    <property type="match status" value="1"/>
</dbReference>
<dbReference type="InterPro" id="IPR000971">
    <property type="entry name" value="Globin"/>
</dbReference>
<dbReference type="InterPro" id="IPR009050">
    <property type="entry name" value="Globin-like_sf"/>
</dbReference>
<dbReference type="InterPro" id="IPR002335">
    <property type="entry name" value="Myoglobin"/>
</dbReference>
<dbReference type="PANTHER" id="PTHR47132">
    <property type="entry name" value="MYOGLOBIN"/>
    <property type="match status" value="1"/>
</dbReference>
<dbReference type="PANTHER" id="PTHR47132:SF1">
    <property type="entry name" value="MYOGLOBIN"/>
    <property type="match status" value="1"/>
</dbReference>
<dbReference type="Pfam" id="PF00042">
    <property type="entry name" value="Globin"/>
    <property type="match status" value="1"/>
</dbReference>
<dbReference type="PRINTS" id="PR00613">
    <property type="entry name" value="MYOGLOBIN"/>
</dbReference>
<dbReference type="SUPFAM" id="SSF46458">
    <property type="entry name" value="Globin-like"/>
    <property type="match status" value="1"/>
</dbReference>
<dbReference type="PROSITE" id="PS01033">
    <property type="entry name" value="GLOBIN"/>
    <property type="match status" value="1"/>
</dbReference>
<reference key="1">
    <citation type="journal article" date="1973" name="FEBS Lett.">
        <title>Penguin (Aptenodytes forsteri) myoglobin. A 70 residue N-terminal sequence.</title>
        <authorList>
            <person name="Peiffer S."/>
            <person name="Deconinck M."/>
            <person name="Paul C."/>
            <person name="Depreter J."/>
            <person name="Schnek A.G."/>
            <person name="Leonis J."/>
        </authorList>
    </citation>
    <scope>PROTEIN SEQUENCE OF 2-71</scope>
</reference>
<reference key="2">
    <citation type="book" date="1977" name="Myoglobin">
        <editorList>
            <person name="Schnek A.G."/>
            <person name="Vandecasserie C."/>
        </editorList>
        <authorList>
            <person name="Castillo O."/>
            <person name="Lehmann H."/>
            <person name="Joysey K.A."/>
            <person name="Friday A.E."/>
        </authorList>
    </citation>
    <scope>PROTEIN SEQUENCE OF 2-153</scope>
</reference>